<organism>
    <name type="scientific">Buchnera aphidicola subsp. Schizaphis graminum (strain Sg)</name>
    <dbReference type="NCBI Taxonomy" id="198804"/>
    <lineage>
        <taxon>Bacteria</taxon>
        <taxon>Pseudomonadati</taxon>
        <taxon>Pseudomonadota</taxon>
        <taxon>Gammaproteobacteria</taxon>
        <taxon>Enterobacterales</taxon>
        <taxon>Erwiniaceae</taxon>
        <taxon>Buchnera</taxon>
    </lineage>
</organism>
<feature type="chain" id="PRO_0000148577" description="Argininosuccinate synthase">
    <location>
        <begin position="1"/>
        <end position="401"/>
    </location>
</feature>
<feature type="binding site" evidence="1">
    <location>
        <begin position="10"/>
        <end position="18"/>
    </location>
    <ligand>
        <name>ATP</name>
        <dbReference type="ChEBI" id="CHEBI:30616"/>
    </ligand>
</feature>
<feature type="binding site" evidence="1">
    <location>
        <position position="37"/>
    </location>
    <ligand>
        <name>ATP</name>
        <dbReference type="ChEBI" id="CHEBI:30616"/>
    </ligand>
</feature>
<feature type="binding site" evidence="1">
    <location>
        <position position="89"/>
    </location>
    <ligand>
        <name>L-citrulline</name>
        <dbReference type="ChEBI" id="CHEBI:57743"/>
    </ligand>
</feature>
<feature type="binding site" evidence="1">
    <location>
        <position position="119"/>
    </location>
    <ligand>
        <name>ATP</name>
        <dbReference type="ChEBI" id="CHEBI:30616"/>
    </ligand>
</feature>
<feature type="binding site" evidence="1">
    <location>
        <position position="121"/>
    </location>
    <ligand>
        <name>L-aspartate</name>
        <dbReference type="ChEBI" id="CHEBI:29991"/>
    </ligand>
</feature>
<feature type="binding site" evidence="1">
    <location>
        <position position="125"/>
    </location>
    <ligand>
        <name>L-aspartate</name>
        <dbReference type="ChEBI" id="CHEBI:29991"/>
    </ligand>
</feature>
<feature type="binding site" evidence="1">
    <location>
        <position position="125"/>
    </location>
    <ligand>
        <name>L-citrulline</name>
        <dbReference type="ChEBI" id="CHEBI:57743"/>
    </ligand>
</feature>
<feature type="binding site" evidence="1">
    <location>
        <position position="126"/>
    </location>
    <ligand>
        <name>L-aspartate</name>
        <dbReference type="ChEBI" id="CHEBI:29991"/>
    </ligand>
</feature>
<feature type="binding site" evidence="1">
    <location>
        <position position="129"/>
    </location>
    <ligand>
        <name>L-citrulline</name>
        <dbReference type="ChEBI" id="CHEBI:57743"/>
    </ligand>
</feature>
<feature type="binding site" evidence="1">
    <location>
        <position position="178"/>
    </location>
    <ligand>
        <name>L-citrulline</name>
        <dbReference type="ChEBI" id="CHEBI:57743"/>
    </ligand>
</feature>
<feature type="binding site" evidence="1">
    <location>
        <position position="187"/>
    </location>
    <ligand>
        <name>L-citrulline</name>
        <dbReference type="ChEBI" id="CHEBI:57743"/>
    </ligand>
</feature>
<feature type="binding site" evidence="1">
    <location>
        <position position="263"/>
    </location>
    <ligand>
        <name>L-citrulline</name>
        <dbReference type="ChEBI" id="CHEBI:57743"/>
    </ligand>
</feature>
<feature type="binding site" evidence="1">
    <location>
        <position position="275"/>
    </location>
    <ligand>
        <name>L-citrulline</name>
        <dbReference type="ChEBI" id="CHEBI:57743"/>
    </ligand>
</feature>
<accession>Q8KA60</accession>
<comment type="catalytic activity">
    <reaction evidence="1">
        <text>L-citrulline + L-aspartate + ATP = 2-(N(omega)-L-arginino)succinate + AMP + diphosphate + H(+)</text>
        <dbReference type="Rhea" id="RHEA:10932"/>
        <dbReference type="ChEBI" id="CHEBI:15378"/>
        <dbReference type="ChEBI" id="CHEBI:29991"/>
        <dbReference type="ChEBI" id="CHEBI:30616"/>
        <dbReference type="ChEBI" id="CHEBI:33019"/>
        <dbReference type="ChEBI" id="CHEBI:57472"/>
        <dbReference type="ChEBI" id="CHEBI:57743"/>
        <dbReference type="ChEBI" id="CHEBI:456215"/>
        <dbReference type="EC" id="6.3.4.5"/>
    </reaction>
</comment>
<comment type="pathway">
    <text evidence="1">Amino-acid biosynthesis; L-arginine biosynthesis; L-arginine from L-ornithine and carbamoyl phosphate: step 2/3.</text>
</comment>
<comment type="subunit">
    <text evidence="1">Homotetramer.</text>
</comment>
<comment type="subcellular location">
    <subcellularLocation>
        <location evidence="1">Cytoplasm</location>
    </subcellularLocation>
</comment>
<comment type="similarity">
    <text evidence="1">Belongs to the argininosuccinate synthase family. Type 1 subfamily.</text>
</comment>
<keyword id="KW-0028">Amino-acid biosynthesis</keyword>
<keyword id="KW-0055">Arginine biosynthesis</keyword>
<keyword id="KW-0067">ATP-binding</keyword>
<keyword id="KW-0963">Cytoplasm</keyword>
<keyword id="KW-0436">Ligase</keyword>
<keyword id="KW-0547">Nucleotide-binding</keyword>
<name>ASSY_BUCAP</name>
<proteinExistence type="inferred from homology"/>
<evidence type="ECO:0000255" key="1">
    <source>
        <dbReference type="HAMAP-Rule" id="MF_00005"/>
    </source>
</evidence>
<sequence length="401" mass="45124">MNNFKKVVLAYSGGLDTSAIIPWLKENYHVDVVAFVADIGQSKKDLNGIEKKALQSGAIDCRVFDLKEEFIKDYVYPVLKTGSLYEGNYLLGTAIARPIIAKKQVEFASSIGAKFLCHGATGKGNDQVRFEIAYAALAPYMKVIAPWREWNLNSRESLLEYLREKNIPTSATLEKIYSRDENSLHISTEGGLLEDLWNKPNADCWNWTVELEDAPEQPEYISLIVKNGSVVSVNNEFLTPLKCIEKLNKIGSKHAIGRIDIVENRLVGIKSRGCYETPGGTIMHIALRAIEQLVFDRESFKWREKIGLEMSSVVYDGRWFTPIRKSLQASADSLSSEVNGEVVLKLYKGSVIPVQKKSSNSLYSKEYATFGEDEVYKHSDAEGFIRLFSLSSRIRAQNKLK</sequence>
<reference key="1">
    <citation type="journal article" date="2002" name="Science">
        <title>50 million years of genomic stasis in endosymbiotic bacteria.</title>
        <authorList>
            <person name="Tamas I."/>
            <person name="Klasson L."/>
            <person name="Canbaeck B."/>
            <person name="Naeslund A.K."/>
            <person name="Eriksson A.-S."/>
            <person name="Wernegreen J.J."/>
            <person name="Sandstroem J.P."/>
            <person name="Moran N.A."/>
            <person name="Andersson S.G.E."/>
        </authorList>
    </citation>
    <scope>NUCLEOTIDE SEQUENCE [LARGE SCALE GENOMIC DNA]</scope>
    <source>
        <strain>Sg</strain>
    </source>
</reference>
<protein>
    <recommendedName>
        <fullName evidence="1">Argininosuccinate synthase</fullName>
        <ecNumber evidence="1">6.3.4.5</ecNumber>
    </recommendedName>
    <alternativeName>
        <fullName evidence="1">Citrulline--aspartate ligase</fullName>
    </alternativeName>
</protein>
<dbReference type="EC" id="6.3.4.5" evidence="1"/>
<dbReference type="EMBL" id="AE013218">
    <property type="protein sequence ID" value="AAM67618.1"/>
    <property type="molecule type" value="Genomic_DNA"/>
</dbReference>
<dbReference type="RefSeq" id="WP_011053584.1">
    <property type="nucleotide sequence ID" value="NC_004061.1"/>
</dbReference>
<dbReference type="SMR" id="Q8KA60"/>
<dbReference type="STRING" id="198804.BUsg_047"/>
<dbReference type="GeneID" id="93003514"/>
<dbReference type="KEGG" id="bas:BUsg_047"/>
<dbReference type="eggNOG" id="COG0137">
    <property type="taxonomic scope" value="Bacteria"/>
</dbReference>
<dbReference type="HOGENOM" id="CLU_032784_4_2_6"/>
<dbReference type="UniPathway" id="UPA00068">
    <property type="reaction ID" value="UER00113"/>
</dbReference>
<dbReference type="Proteomes" id="UP000000416">
    <property type="component" value="Chromosome"/>
</dbReference>
<dbReference type="GO" id="GO:0005737">
    <property type="term" value="C:cytoplasm"/>
    <property type="evidence" value="ECO:0007669"/>
    <property type="project" value="UniProtKB-SubCell"/>
</dbReference>
<dbReference type="GO" id="GO:0004055">
    <property type="term" value="F:argininosuccinate synthase activity"/>
    <property type="evidence" value="ECO:0007669"/>
    <property type="project" value="UniProtKB-UniRule"/>
</dbReference>
<dbReference type="GO" id="GO:0005524">
    <property type="term" value="F:ATP binding"/>
    <property type="evidence" value="ECO:0007669"/>
    <property type="project" value="UniProtKB-UniRule"/>
</dbReference>
<dbReference type="GO" id="GO:0000053">
    <property type="term" value="P:argininosuccinate metabolic process"/>
    <property type="evidence" value="ECO:0007669"/>
    <property type="project" value="TreeGrafter"/>
</dbReference>
<dbReference type="GO" id="GO:0006526">
    <property type="term" value="P:L-arginine biosynthetic process"/>
    <property type="evidence" value="ECO:0007669"/>
    <property type="project" value="UniProtKB-UniRule"/>
</dbReference>
<dbReference type="GO" id="GO:0000050">
    <property type="term" value="P:urea cycle"/>
    <property type="evidence" value="ECO:0007669"/>
    <property type="project" value="TreeGrafter"/>
</dbReference>
<dbReference type="CDD" id="cd01999">
    <property type="entry name" value="ASS"/>
    <property type="match status" value="1"/>
</dbReference>
<dbReference type="FunFam" id="3.40.50.620:FF:000019">
    <property type="entry name" value="Argininosuccinate synthase"/>
    <property type="match status" value="1"/>
</dbReference>
<dbReference type="FunFam" id="3.90.1260.10:FF:000007">
    <property type="entry name" value="Argininosuccinate synthase"/>
    <property type="match status" value="1"/>
</dbReference>
<dbReference type="Gene3D" id="3.90.1260.10">
    <property type="entry name" value="Argininosuccinate synthetase, chain A, domain 2"/>
    <property type="match status" value="1"/>
</dbReference>
<dbReference type="Gene3D" id="3.40.50.620">
    <property type="entry name" value="HUPs"/>
    <property type="match status" value="1"/>
</dbReference>
<dbReference type="Gene3D" id="1.20.5.470">
    <property type="entry name" value="Single helix bin"/>
    <property type="match status" value="1"/>
</dbReference>
<dbReference type="HAMAP" id="MF_00005">
    <property type="entry name" value="Arg_succ_synth_type1"/>
    <property type="match status" value="1"/>
</dbReference>
<dbReference type="InterPro" id="IPR048268">
    <property type="entry name" value="Arginosuc_syn_C"/>
</dbReference>
<dbReference type="InterPro" id="IPR048267">
    <property type="entry name" value="Arginosuc_syn_N"/>
</dbReference>
<dbReference type="InterPro" id="IPR001518">
    <property type="entry name" value="Arginosuc_synth"/>
</dbReference>
<dbReference type="InterPro" id="IPR018223">
    <property type="entry name" value="Arginosuc_synth_CS"/>
</dbReference>
<dbReference type="InterPro" id="IPR023434">
    <property type="entry name" value="Arginosuc_synth_type_1_subfam"/>
</dbReference>
<dbReference type="InterPro" id="IPR024074">
    <property type="entry name" value="AS_cat/multimer_dom_body"/>
</dbReference>
<dbReference type="InterPro" id="IPR014729">
    <property type="entry name" value="Rossmann-like_a/b/a_fold"/>
</dbReference>
<dbReference type="NCBIfam" id="TIGR00032">
    <property type="entry name" value="argG"/>
    <property type="match status" value="1"/>
</dbReference>
<dbReference type="NCBIfam" id="NF001770">
    <property type="entry name" value="PRK00509.1"/>
    <property type="match status" value="1"/>
</dbReference>
<dbReference type="PANTHER" id="PTHR11587">
    <property type="entry name" value="ARGININOSUCCINATE SYNTHASE"/>
    <property type="match status" value="1"/>
</dbReference>
<dbReference type="PANTHER" id="PTHR11587:SF2">
    <property type="entry name" value="ARGININOSUCCINATE SYNTHASE"/>
    <property type="match status" value="1"/>
</dbReference>
<dbReference type="Pfam" id="PF20979">
    <property type="entry name" value="Arginosuc_syn_C"/>
    <property type="match status" value="1"/>
</dbReference>
<dbReference type="Pfam" id="PF00764">
    <property type="entry name" value="Arginosuc_synth"/>
    <property type="match status" value="1"/>
</dbReference>
<dbReference type="SUPFAM" id="SSF52402">
    <property type="entry name" value="Adenine nucleotide alpha hydrolases-like"/>
    <property type="match status" value="1"/>
</dbReference>
<dbReference type="SUPFAM" id="SSF69864">
    <property type="entry name" value="Argininosuccinate synthetase, C-terminal domain"/>
    <property type="match status" value="1"/>
</dbReference>
<dbReference type="PROSITE" id="PS00564">
    <property type="entry name" value="ARGININOSUCCIN_SYN_1"/>
    <property type="match status" value="1"/>
</dbReference>
<dbReference type="PROSITE" id="PS00565">
    <property type="entry name" value="ARGININOSUCCIN_SYN_2"/>
    <property type="match status" value="1"/>
</dbReference>
<gene>
    <name evidence="1" type="primary">argG</name>
    <name type="ordered locus">BUsg_047</name>
</gene>